<protein>
    <recommendedName>
        <fullName>Muscarinic toxin 2</fullName>
        <shortName>MT2</shortName>
        <shortName evidence="7">MTx2</shortName>
    </recommendedName>
</protein>
<proteinExistence type="evidence at protein level"/>
<feature type="signal peptide" evidence="2 5">
    <location>
        <begin position="1"/>
        <end position="21"/>
    </location>
</feature>
<feature type="chain" id="PRO_0000035480" description="Muscarinic toxin 2" evidence="2 5">
    <location>
        <begin position="22"/>
        <end position="86"/>
    </location>
</feature>
<feature type="disulfide bond" evidence="4 6 10">
    <location>
        <begin position="24"/>
        <end position="45"/>
    </location>
</feature>
<feature type="disulfide bond" evidence="4 6 10">
    <location>
        <begin position="38"/>
        <end position="63"/>
    </location>
</feature>
<feature type="disulfide bond" evidence="4 6 10">
    <location>
        <begin position="67"/>
        <end position="78"/>
    </location>
</feature>
<feature type="disulfide bond" evidence="4 6 10">
    <location>
        <begin position="79"/>
        <end position="84"/>
    </location>
</feature>
<feature type="strand" evidence="11">
    <location>
        <begin position="23"/>
        <end position="27"/>
    </location>
</feature>
<feature type="strand" evidence="11">
    <location>
        <begin position="31"/>
        <end position="37"/>
    </location>
</feature>
<feature type="strand" evidence="11">
    <location>
        <begin position="44"/>
        <end position="55"/>
    </location>
</feature>
<feature type="strand" evidence="11">
    <location>
        <begin position="57"/>
        <end position="66"/>
    </location>
</feature>
<feature type="strand" evidence="11">
    <location>
        <begin position="76"/>
        <end position="79"/>
    </location>
</feature>
<feature type="turn" evidence="11">
    <location>
        <begin position="82"/>
        <end position="85"/>
    </location>
</feature>
<reference key="1">
    <citation type="journal article" date="1991" name="Toxicon">
        <title>Amino acid sequence of a muscarinic toxin deduced from the cDNA nucleotide sequence.</title>
        <authorList>
            <person name="Ducancel F."/>
            <person name="Rowan E.G."/>
            <person name="Cassar E."/>
            <person name="Harvey A.L."/>
            <person name="Menez A."/>
            <person name="Boulain J.-C."/>
        </authorList>
    </citation>
    <scope>NUCLEOTIDE SEQUENCE [MRNA]</scope>
    <source>
        <tissue>Venom gland</tissue>
    </source>
</reference>
<reference key="2">
    <citation type="journal article" date="1991" name="Toxicon">
        <title>Amino acid sequence of a snake venom toxin that binds to the muscarinic acetylcholine receptor.</title>
        <authorList>
            <person name="Karlsson E."/>
            <person name="Risinger C."/>
            <person name="Jolkkonen M."/>
            <person name="Wernstedt C."/>
            <person name="Adem A."/>
        </authorList>
    </citation>
    <scope>PROTEIN SEQUENCE OF 22-86</scope>
    <scope>SUBCELLULAR LOCATION</scope>
    <source>
        <tissue>Venom</tissue>
    </source>
</reference>
<reference key="3">
    <citation type="journal article" date="1994" name="Ann. N. Y. Acad. Sci.">
        <title>Protein toxins that bind to muscarinic acetylcholine receptors.</title>
        <authorList>
            <person name="Karlsson E."/>
            <person name="Jolkkonen M."/>
            <person name="Satyapan N."/>
            <person name="Adem A."/>
            <person name="Kumlin E."/>
            <person name="Hellman U."/>
            <person name="Wernstedt C."/>
        </authorList>
    </citation>
    <scope>PROTEIN SEQUENCE OF 22-86</scope>
</reference>
<reference key="4">
    <citation type="journal article" date="1995" name="Toxicon">
        <title>Binding of muscarinic toxins MTx1 and MTx2 from the venom of the green mamba Dendroaspis angusticeps to cloned human muscarinic cholinoceptors.</title>
        <authorList>
            <person name="Kornisiuk E."/>
            <person name="Jerusalinsky D."/>
            <person name="Cervenansky C."/>
            <person name="Harvey A.L."/>
        </authorList>
    </citation>
    <scope>FUNCTION</scope>
</reference>
<reference key="5">
    <citation type="journal article" date="1994" name="FEBS Lett.">
        <title>Two-step binding of green mamba toxin to muscarinic acetylcholine receptor.</title>
        <authorList>
            <person name="Toomela T."/>
            <person name="Jolkkonen M."/>
            <person name="Rinken A."/>
            <person name="Jarv J."/>
            <person name="Karlsson E."/>
        </authorList>
    </citation>
    <scope>MECHANISM OF BINDING</scope>
</reference>
<reference key="6">
    <citation type="journal article" date="1995" name="Biochemistry">
        <title>Solution structure of a green mamba toxin that activates muscarinic acetylcholine receptors, as studied by nuclear magnetic resonance and molecular modeling.</title>
        <authorList>
            <person name="Segalas I."/>
            <person name="Roumestand C."/>
            <person name="Zinn-Justin S."/>
            <person name="Gilquin B."/>
            <person name="Menez R."/>
            <person name="Menez A."/>
            <person name="Toma F."/>
        </authorList>
    </citation>
    <scope>STRUCTURE BY NMR</scope>
    <scope>DISULFIDE BONDS</scope>
    <scope>MODELING</scope>
</reference>
<reference key="7">
    <citation type="submission" date="2000-07" db="PDB data bank">
        <title>X-ray structure of muscarinic toxin 2.</title>
        <authorList>
            <person name="Menez R."/>
            <person name="Le Du M.H."/>
            <person name="Gaucher J.F."/>
            <person name="Menez A."/>
        </authorList>
    </citation>
    <scope>X-RAY CRYSTALLOGRAPHY (1.5 ANGSTROMS) OF 1-65</scope>
    <scope>DISULFIDE BONDS</scope>
</reference>
<evidence type="ECO:0000250" key="1"/>
<evidence type="ECO:0000269" key="2">
    <source>
    </source>
</evidence>
<evidence type="ECO:0000269" key="3">
    <source>
    </source>
</evidence>
<evidence type="ECO:0000269" key="4">
    <source>
    </source>
</evidence>
<evidence type="ECO:0000269" key="5">
    <source>
    </source>
</evidence>
<evidence type="ECO:0000269" key="6">
    <source ref="7"/>
</evidence>
<evidence type="ECO:0000303" key="7">
    <source>
    </source>
</evidence>
<evidence type="ECO:0000305" key="8"/>
<evidence type="ECO:0000305" key="9">
    <source>
    </source>
</evidence>
<evidence type="ECO:0000312" key="10">
    <source>
        <dbReference type="PDB" id="1FF4"/>
    </source>
</evidence>
<evidence type="ECO:0007829" key="11">
    <source>
        <dbReference type="PDB" id="1FF4"/>
    </source>
</evidence>
<name>3SIM2_DENAN</name>
<keyword id="KW-0002">3D-structure</keyword>
<keyword id="KW-0903">Direct protein sequencing</keyword>
<keyword id="KW-1015">Disulfide bond</keyword>
<keyword id="KW-1214">G-protein coupled acetylcholine receptor impairing toxin</keyword>
<keyword id="KW-1213">G-protein coupled receptor impairing toxin</keyword>
<keyword id="KW-0528">Neurotoxin</keyword>
<keyword id="KW-0629">Postsynaptic neurotoxin</keyword>
<keyword id="KW-0964">Secreted</keyword>
<keyword id="KW-0732">Signal</keyword>
<keyword id="KW-0800">Toxin</keyword>
<sequence length="86" mass="9375">MKTLLLTLVVVTIVCLDLGYTLTCVTTKSIGGVTTEDCPAGQNVCFKRWHYVTPKNYDIIKGCAATCPKVDNNDPIRCCGTDKCND</sequence>
<comment type="function">
    <text evidence="3">Binds irreversibly to M1 (CHRM1) muscarinic acetylcholine receptors, and reveals a slightly weaker effect on M3 (CHRM3) receptors. The mechanism of toxin-receptor interaction comprises at least two steps. The first step is fast with no competition between the toxin and the antagonist. The second step is slow with formation of a more stable toxin-receptor complex and inhibition of the antagonist binding.</text>
</comment>
<comment type="subunit">
    <text evidence="1">Monomer.</text>
</comment>
<comment type="subcellular location">
    <subcellularLocation>
        <location evidence="2">Secreted</location>
    </subcellularLocation>
</comment>
<comment type="tissue specificity">
    <text evidence="8">Expressed by the venom gland.</text>
</comment>
<comment type="miscellaneous">
    <text evidence="9">Negative results: has no effect on M2 (CHRM2) and M4 (CHRM4) receptors.</text>
</comment>
<comment type="miscellaneous">
    <text evidence="8">Is classified as a P-type cytotoxin, since a proline residue stands at position 54 (Pro-31 in standard classification).</text>
</comment>
<comment type="similarity">
    <text evidence="8">Belongs to the three-finger toxin family. Short-chain subfamily. Aminergic toxin sub-subfamily.</text>
</comment>
<accession>P18328</accession>
<accession>Q9PRY3</accession>
<organism>
    <name type="scientific">Dendroaspis angusticeps</name>
    <name type="common">Eastern green mamba</name>
    <name type="synonym">Naja angusticeps</name>
    <dbReference type="NCBI Taxonomy" id="8618"/>
    <lineage>
        <taxon>Eukaryota</taxon>
        <taxon>Metazoa</taxon>
        <taxon>Chordata</taxon>
        <taxon>Craniata</taxon>
        <taxon>Vertebrata</taxon>
        <taxon>Euteleostomi</taxon>
        <taxon>Lepidosauria</taxon>
        <taxon>Squamata</taxon>
        <taxon>Bifurcata</taxon>
        <taxon>Unidentata</taxon>
        <taxon>Episquamata</taxon>
        <taxon>Toxicofera</taxon>
        <taxon>Serpentes</taxon>
        <taxon>Colubroidea</taxon>
        <taxon>Elapidae</taxon>
        <taxon>Elapinae</taxon>
        <taxon>Dendroaspis</taxon>
    </lineage>
</organism>
<dbReference type="EMBL" id="X52292">
    <property type="protein sequence ID" value="CAA36541.1"/>
    <property type="molecule type" value="mRNA"/>
</dbReference>
<dbReference type="PIR" id="A37910">
    <property type="entry name" value="A37910"/>
</dbReference>
<dbReference type="PDB" id="1FF4">
    <property type="method" value="X-ray"/>
    <property type="resolution" value="1.50 A"/>
    <property type="chains" value="A=22-86"/>
</dbReference>
<dbReference type="PDBsum" id="1FF4"/>
<dbReference type="SMR" id="P18328"/>
<dbReference type="EvolutionaryTrace" id="P18328"/>
<dbReference type="GO" id="GO:0005576">
    <property type="term" value="C:extracellular region"/>
    <property type="evidence" value="ECO:0007669"/>
    <property type="project" value="UniProtKB-SubCell"/>
</dbReference>
<dbReference type="GO" id="GO:0090729">
    <property type="term" value="F:toxin activity"/>
    <property type="evidence" value="ECO:0007669"/>
    <property type="project" value="UniProtKB-KW"/>
</dbReference>
<dbReference type="CDD" id="cd00206">
    <property type="entry name" value="TFP_snake_toxin"/>
    <property type="match status" value="1"/>
</dbReference>
<dbReference type="FunFam" id="2.10.60.10:FF:000024">
    <property type="entry name" value="Cytotoxin 1"/>
    <property type="match status" value="1"/>
</dbReference>
<dbReference type="Gene3D" id="2.10.60.10">
    <property type="entry name" value="CD59"/>
    <property type="match status" value="1"/>
</dbReference>
<dbReference type="InterPro" id="IPR003571">
    <property type="entry name" value="Snake_3FTx"/>
</dbReference>
<dbReference type="InterPro" id="IPR045860">
    <property type="entry name" value="Snake_toxin-like_sf"/>
</dbReference>
<dbReference type="InterPro" id="IPR018354">
    <property type="entry name" value="Snake_toxin_con_site"/>
</dbReference>
<dbReference type="InterPro" id="IPR054131">
    <property type="entry name" value="Toxin_cobra-type"/>
</dbReference>
<dbReference type="Pfam" id="PF21947">
    <property type="entry name" value="Toxin_cobra-type"/>
    <property type="match status" value="1"/>
</dbReference>
<dbReference type="SUPFAM" id="SSF57302">
    <property type="entry name" value="Snake toxin-like"/>
    <property type="match status" value="1"/>
</dbReference>
<dbReference type="PROSITE" id="PS00272">
    <property type="entry name" value="SNAKE_TOXIN"/>
    <property type="match status" value="1"/>
</dbReference>